<name>DUT_METBU</name>
<dbReference type="EC" id="3.6.1.23" evidence="1"/>
<dbReference type="EMBL" id="CP000300">
    <property type="protein sequence ID" value="ABE51855.1"/>
    <property type="molecule type" value="Genomic_DNA"/>
</dbReference>
<dbReference type="RefSeq" id="WP_011499008.1">
    <property type="nucleotide sequence ID" value="NC_007955.1"/>
</dbReference>
<dbReference type="SMR" id="Q12XH1"/>
<dbReference type="STRING" id="259564.Mbur_0910"/>
<dbReference type="GeneID" id="3998654"/>
<dbReference type="KEGG" id="mbu:Mbur_0910"/>
<dbReference type="HOGENOM" id="CLU_103451_2_0_2"/>
<dbReference type="OrthoDB" id="45265at2157"/>
<dbReference type="UniPathway" id="UPA00610">
    <property type="reaction ID" value="UER00666"/>
</dbReference>
<dbReference type="Proteomes" id="UP000001979">
    <property type="component" value="Chromosome"/>
</dbReference>
<dbReference type="GO" id="GO:0008829">
    <property type="term" value="F:dCTP deaminase activity"/>
    <property type="evidence" value="ECO:0007669"/>
    <property type="project" value="InterPro"/>
</dbReference>
<dbReference type="GO" id="GO:0004170">
    <property type="term" value="F:dUTP diphosphatase activity"/>
    <property type="evidence" value="ECO:0007669"/>
    <property type="project" value="UniProtKB-UniRule"/>
</dbReference>
<dbReference type="GO" id="GO:0006226">
    <property type="term" value="P:dUMP biosynthetic process"/>
    <property type="evidence" value="ECO:0007669"/>
    <property type="project" value="UniProtKB-UniRule"/>
</dbReference>
<dbReference type="GO" id="GO:0006229">
    <property type="term" value="P:dUTP biosynthetic process"/>
    <property type="evidence" value="ECO:0007669"/>
    <property type="project" value="InterPro"/>
</dbReference>
<dbReference type="CDD" id="cd07557">
    <property type="entry name" value="trimeric_dUTPase"/>
    <property type="match status" value="1"/>
</dbReference>
<dbReference type="Gene3D" id="2.70.40.10">
    <property type="match status" value="1"/>
</dbReference>
<dbReference type="HAMAP" id="MF_00635">
    <property type="entry name" value="dUTPase_arch"/>
    <property type="match status" value="1"/>
</dbReference>
<dbReference type="InterPro" id="IPR011962">
    <property type="entry name" value="dCTP_deaminase"/>
</dbReference>
<dbReference type="InterPro" id="IPR036157">
    <property type="entry name" value="dUTPase-like_sf"/>
</dbReference>
<dbReference type="InterPro" id="IPR023537">
    <property type="entry name" value="dUTPase_archaeal"/>
</dbReference>
<dbReference type="InterPro" id="IPR033704">
    <property type="entry name" value="dUTPase_trimeric"/>
</dbReference>
<dbReference type="NCBIfam" id="NF002598">
    <property type="entry name" value="PRK02253.1"/>
    <property type="match status" value="1"/>
</dbReference>
<dbReference type="PANTHER" id="PTHR42680">
    <property type="entry name" value="DCTP DEAMINASE"/>
    <property type="match status" value="1"/>
</dbReference>
<dbReference type="PANTHER" id="PTHR42680:SF1">
    <property type="entry name" value="DEOXYURIDINE 5'-TRIPHOSPHATE NUCLEOTIDOHYDROLASE"/>
    <property type="match status" value="1"/>
</dbReference>
<dbReference type="Pfam" id="PF22769">
    <property type="entry name" value="DCD"/>
    <property type="match status" value="1"/>
</dbReference>
<dbReference type="SUPFAM" id="SSF51283">
    <property type="entry name" value="dUTPase-like"/>
    <property type="match status" value="1"/>
</dbReference>
<comment type="function">
    <text evidence="1">This enzyme is involved in nucleotide metabolism: it produces dUMP, the immediate precursor of thymidine nucleotides and it decreases the intracellular concentration of dUTP so that uracil cannot be incorporated into DNA.</text>
</comment>
<comment type="catalytic activity">
    <reaction evidence="1">
        <text>dUTP + H2O = dUMP + diphosphate + H(+)</text>
        <dbReference type="Rhea" id="RHEA:10248"/>
        <dbReference type="ChEBI" id="CHEBI:15377"/>
        <dbReference type="ChEBI" id="CHEBI:15378"/>
        <dbReference type="ChEBI" id="CHEBI:33019"/>
        <dbReference type="ChEBI" id="CHEBI:61555"/>
        <dbReference type="ChEBI" id="CHEBI:246422"/>
        <dbReference type="EC" id="3.6.1.23"/>
    </reaction>
</comment>
<comment type="pathway">
    <text evidence="1">Pyrimidine metabolism; dUMP biosynthesis; dUMP from dCTP (dUTP route): step 2/2.</text>
</comment>
<comment type="similarity">
    <text evidence="1">Belongs to the dCTP deaminase family. Archaeal dUTPase subfamily.</text>
</comment>
<gene>
    <name evidence="1" type="primary">dut</name>
    <name type="ordered locus">Mbur_0910</name>
</gene>
<organism>
    <name type="scientific">Methanococcoides burtonii (strain DSM 6242 / NBRC 107633 / OCM 468 / ACE-M)</name>
    <dbReference type="NCBI Taxonomy" id="259564"/>
    <lineage>
        <taxon>Archaea</taxon>
        <taxon>Methanobacteriati</taxon>
        <taxon>Methanobacteriota</taxon>
        <taxon>Stenosarchaea group</taxon>
        <taxon>Methanomicrobia</taxon>
        <taxon>Methanosarcinales</taxon>
        <taxon>Methanosarcinaceae</taxon>
        <taxon>Methanococcoides</taxon>
    </lineage>
</organism>
<evidence type="ECO:0000255" key="1">
    <source>
        <dbReference type="HAMAP-Rule" id="MF_00635"/>
    </source>
</evidence>
<accession>Q12XH1</accession>
<protein>
    <recommendedName>
        <fullName evidence="1">Probable deoxyuridine 5'-triphosphate nucleotidohydrolase</fullName>
        <shortName evidence="1">dUTPase</shortName>
        <ecNumber evidence="1">3.6.1.23</ecNumber>
    </recommendedName>
    <alternativeName>
        <fullName evidence="1">dUTP pyrophosphatase</fullName>
    </alternativeName>
</protein>
<feature type="chain" id="PRO_1000061431" description="Probable deoxyuridine 5'-triphosphate nucleotidohydrolase">
    <location>
        <begin position="1"/>
        <end position="170"/>
    </location>
</feature>
<sequence>MTLLSQNELRELVLANPPLVENMIDMDTQLQPNGVEMTLKEIRTIKSPGAVDFDNSGRRLSEGDTIEFNEDGWIHLDPGVYKVLLNEIVNIPKDLAAIAKPRSTLIRCGATLETAVWDAGYSGRSECMIVVHNKDGFDLKKDARIMQLLFYHLHTEVEEGYSGSYQNENI</sequence>
<reference key="1">
    <citation type="journal article" date="2009" name="ISME J.">
        <title>The genome sequence of the psychrophilic archaeon, Methanococcoides burtonii: the role of genome evolution in cold adaptation.</title>
        <authorList>
            <person name="Allen M.A."/>
            <person name="Lauro F.M."/>
            <person name="Williams T.J."/>
            <person name="Burg D."/>
            <person name="Siddiqui K.S."/>
            <person name="De Francisci D."/>
            <person name="Chong K.W."/>
            <person name="Pilak O."/>
            <person name="Chew H.H."/>
            <person name="De Maere M.Z."/>
            <person name="Ting L."/>
            <person name="Katrib M."/>
            <person name="Ng C."/>
            <person name="Sowers K.R."/>
            <person name="Galperin M.Y."/>
            <person name="Anderson I.J."/>
            <person name="Ivanova N."/>
            <person name="Dalin E."/>
            <person name="Martinez M."/>
            <person name="Lapidus A."/>
            <person name="Hauser L."/>
            <person name="Land M."/>
            <person name="Thomas T."/>
            <person name="Cavicchioli R."/>
        </authorList>
    </citation>
    <scope>NUCLEOTIDE SEQUENCE [LARGE SCALE GENOMIC DNA]</scope>
    <source>
        <strain>DSM 6242 / NBRC 107633 / OCM 468 / ACE-M</strain>
    </source>
</reference>
<proteinExistence type="inferred from homology"/>
<keyword id="KW-0378">Hydrolase</keyword>
<keyword id="KW-0546">Nucleotide metabolism</keyword>